<comment type="function">
    <text evidence="1">Involved in the maturation of [NiFe] hydrogenases. Required for nickel insertion into the metal center of the hydrogenase.</text>
</comment>
<comment type="similarity">
    <text evidence="1">Belongs to the HypA/HybF family.</text>
</comment>
<gene>
    <name evidence="1" type="primary">hypA</name>
    <name type="ordered locus">lpl2396</name>
</gene>
<keyword id="KW-0479">Metal-binding</keyword>
<keyword id="KW-0533">Nickel</keyword>
<keyword id="KW-0862">Zinc</keyword>
<reference key="1">
    <citation type="journal article" date="2004" name="Nat. Genet.">
        <title>Evidence in the Legionella pneumophila genome for exploitation of host cell functions and high genome plasticity.</title>
        <authorList>
            <person name="Cazalet C."/>
            <person name="Rusniok C."/>
            <person name="Brueggemann H."/>
            <person name="Zidane N."/>
            <person name="Magnier A."/>
            <person name="Ma L."/>
            <person name="Tichit M."/>
            <person name="Jarraud S."/>
            <person name="Bouchier C."/>
            <person name="Vandenesch F."/>
            <person name="Kunst F."/>
            <person name="Etienne J."/>
            <person name="Glaser P."/>
            <person name="Buchrieser C."/>
        </authorList>
    </citation>
    <scope>NUCLEOTIDE SEQUENCE [LARGE SCALE GENOMIC DNA]</scope>
    <source>
        <strain>Lens</strain>
    </source>
</reference>
<accession>Q5WTX7</accession>
<feature type="chain" id="PRO_1000023835" description="Hydrogenase maturation factor HypA">
    <location>
        <begin position="1"/>
        <end position="113"/>
    </location>
</feature>
<feature type="binding site" evidence="1">
    <location>
        <position position="2"/>
    </location>
    <ligand>
        <name>Ni(2+)</name>
        <dbReference type="ChEBI" id="CHEBI:49786"/>
    </ligand>
</feature>
<feature type="binding site" evidence="1">
    <location>
        <position position="73"/>
    </location>
    <ligand>
        <name>Zn(2+)</name>
        <dbReference type="ChEBI" id="CHEBI:29105"/>
    </ligand>
</feature>
<feature type="binding site" evidence="1">
    <location>
        <position position="76"/>
    </location>
    <ligand>
        <name>Zn(2+)</name>
        <dbReference type="ChEBI" id="CHEBI:29105"/>
    </ligand>
</feature>
<feature type="binding site" evidence="1">
    <location>
        <position position="89"/>
    </location>
    <ligand>
        <name>Zn(2+)</name>
        <dbReference type="ChEBI" id="CHEBI:29105"/>
    </ligand>
</feature>
<feature type="binding site" evidence="1">
    <location>
        <position position="92"/>
    </location>
    <ligand>
        <name>Zn(2+)</name>
        <dbReference type="ChEBI" id="CHEBI:29105"/>
    </ligand>
</feature>
<name>HYPA_LEGPL</name>
<protein>
    <recommendedName>
        <fullName evidence="1">Hydrogenase maturation factor HypA</fullName>
    </recommendedName>
</protein>
<dbReference type="EMBL" id="CR628337">
    <property type="protein sequence ID" value="CAH16636.1"/>
    <property type="molecule type" value="Genomic_DNA"/>
</dbReference>
<dbReference type="RefSeq" id="WP_010948178.1">
    <property type="nucleotide sequence ID" value="NC_006369.1"/>
</dbReference>
<dbReference type="SMR" id="Q5WTX7"/>
<dbReference type="GeneID" id="57036470"/>
<dbReference type="KEGG" id="lpf:lpl2396"/>
<dbReference type="LegioList" id="lpl2396"/>
<dbReference type="HOGENOM" id="CLU_126929_3_0_6"/>
<dbReference type="Proteomes" id="UP000002517">
    <property type="component" value="Chromosome"/>
</dbReference>
<dbReference type="GO" id="GO:0016151">
    <property type="term" value="F:nickel cation binding"/>
    <property type="evidence" value="ECO:0007669"/>
    <property type="project" value="UniProtKB-UniRule"/>
</dbReference>
<dbReference type="GO" id="GO:0008270">
    <property type="term" value="F:zinc ion binding"/>
    <property type="evidence" value="ECO:0007669"/>
    <property type="project" value="UniProtKB-UniRule"/>
</dbReference>
<dbReference type="GO" id="GO:0051604">
    <property type="term" value="P:protein maturation"/>
    <property type="evidence" value="ECO:0007669"/>
    <property type="project" value="InterPro"/>
</dbReference>
<dbReference type="GO" id="GO:0036211">
    <property type="term" value="P:protein modification process"/>
    <property type="evidence" value="ECO:0007669"/>
    <property type="project" value="UniProtKB-UniRule"/>
</dbReference>
<dbReference type="Gene3D" id="3.30.2320.80">
    <property type="match status" value="1"/>
</dbReference>
<dbReference type="HAMAP" id="MF_00213">
    <property type="entry name" value="HypA_HybF"/>
    <property type="match status" value="1"/>
</dbReference>
<dbReference type="InterPro" id="IPR020538">
    <property type="entry name" value="Hydgase_Ni_incorp_HypA/HybF_CS"/>
</dbReference>
<dbReference type="InterPro" id="IPR000688">
    <property type="entry name" value="HypA/HybF"/>
</dbReference>
<dbReference type="NCBIfam" id="TIGR00100">
    <property type="entry name" value="hypA"/>
    <property type="match status" value="1"/>
</dbReference>
<dbReference type="PANTHER" id="PTHR34535">
    <property type="entry name" value="HYDROGENASE MATURATION FACTOR HYPA"/>
    <property type="match status" value="1"/>
</dbReference>
<dbReference type="PANTHER" id="PTHR34535:SF3">
    <property type="entry name" value="HYDROGENASE MATURATION FACTOR HYPA"/>
    <property type="match status" value="1"/>
</dbReference>
<dbReference type="Pfam" id="PF01155">
    <property type="entry name" value="HypA"/>
    <property type="match status" value="1"/>
</dbReference>
<dbReference type="PIRSF" id="PIRSF004761">
    <property type="entry name" value="Hydrgn_mat_HypA"/>
    <property type="match status" value="1"/>
</dbReference>
<dbReference type="PROSITE" id="PS01249">
    <property type="entry name" value="HYPA"/>
    <property type="match status" value="1"/>
</dbReference>
<proteinExistence type="inferred from homology"/>
<organism>
    <name type="scientific">Legionella pneumophila (strain Lens)</name>
    <dbReference type="NCBI Taxonomy" id="297245"/>
    <lineage>
        <taxon>Bacteria</taxon>
        <taxon>Pseudomonadati</taxon>
        <taxon>Pseudomonadota</taxon>
        <taxon>Gammaproteobacteria</taxon>
        <taxon>Legionellales</taxon>
        <taxon>Legionellaceae</taxon>
        <taxon>Legionella</taxon>
    </lineage>
</organism>
<evidence type="ECO:0000255" key="1">
    <source>
        <dbReference type="HAMAP-Rule" id="MF_00213"/>
    </source>
</evidence>
<sequence length="113" mass="12686">MHELWLCKRIVEIIKQQATGNKCRKVKKIVLEIGQLVAVDKHALNFSFKVITQGTIAQNAELSIVEIPGEAICNSCQQIVPMKQYYDECLVCGNHSLTLTKGEELKVKSMVVE</sequence>